<organism>
    <name type="scientific">Maedi visna virus (strain 1514 / clone LV1-1KS2)</name>
    <name type="common">MVV</name>
    <name type="synonym">Visna lentivirus</name>
    <dbReference type="NCBI Taxonomy" id="11744"/>
    <lineage>
        <taxon>Viruses</taxon>
        <taxon>Riboviria</taxon>
        <taxon>Pararnavirae</taxon>
        <taxon>Artverviricota</taxon>
        <taxon>Revtraviricetes</taxon>
        <taxon>Ortervirales</taxon>
        <taxon>Retroviridae</taxon>
        <taxon>Orthoretrovirinae</taxon>
        <taxon>Lentivirus</taxon>
        <taxon>Visna-maedi virus</taxon>
    </lineage>
</organism>
<organismHost>
    <name type="scientific">Ovis aries</name>
    <name type="common">Sheep</name>
    <dbReference type="NCBI Taxonomy" id="9940"/>
</organismHost>
<reference key="1">
    <citation type="journal article" date="1991" name="Virology">
        <title>Isolation of replication-competent molecular clones of visna virus.</title>
        <authorList>
            <person name="Staskus K.A."/>
            <person name="Retzel E.F."/>
            <person name="Lewis E.D."/>
            <person name="Wietgrefe S.W."/>
            <person name="Silsby J.L."/>
            <person name="Cyr S."/>
            <person name="Rank J.M."/>
            <person name="Haase A.T."/>
            <person name="Fast D."/>
            <person name="Geiser P.T."/>
            <person name="Harty J.T."/>
            <person name="Kong S.H."/>
            <person name="Cook R."/>
            <person name="Lahti C.J."/>
            <person name="Neufeld T.P."/>
            <person name="Porter T.E."/>
            <person name="Shoop E."/>
            <person name="Zachow K.R."/>
        </authorList>
    </citation>
    <scope>NUCLEOTIDE SEQUENCE</scope>
</reference>
<proteinExistence type="inferred from homology"/>
<evidence type="ECO:0000250" key="1"/>
<evidence type="ECO:0000305" key="2"/>
<dbReference type="EMBL" id="M60610">
    <property type="protein sequence ID" value="AAA17531.1"/>
    <property type="status" value="ALT_INIT"/>
    <property type="molecule type" value="Unassigned_DNA"/>
</dbReference>
<dbReference type="GO" id="GO:0042025">
    <property type="term" value="C:host cell nucleus"/>
    <property type="evidence" value="ECO:0007669"/>
    <property type="project" value="UniProtKB-SubCell"/>
</dbReference>
<dbReference type="GO" id="GO:0044423">
    <property type="term" value="C:virion component"/>
    <property type="evidence" value="ECO:0007669"/>
    <property type="project" value="UniProtKB-KW"/>
</dbReference>
<dbReference type="InterPro" id="IPR004247">
    <property type="entry name" value="Lentiviral_Vpr-like"/>
</dbReference>
<dbReference type="Pfam" id="PF02998">
    <property type="entry name" value="Lentiviral_Tat"/>
    <property type="match status" value="1"/>
</dbReference>
<protein>
    <recommendedName>
        <fullName>Probable Vpr-like protein</fullName>
    </recommendedName>
    <alternativeName>
        <fullName>Protein S</fullName>
    </alternativeName>
    <alternativeName>
        <fullName>Protein Tat</fullName>
    </alternativeName>
</protein>
<feature type="chain" id="PRO_0000085492" description="Probable Vpr-like protein">
    <location>
        <begin position="1"/>
        <end position="94"/>
    </location>
</feature>
<comment type="function">
    <text evidence="1">Seems to function as a Vpr-like protein, since it mediates host cell cycle arrest in G2 phase. Cell cycle arrest creates a favorable environment for maximizing viral expression and production (By similarity).</text>
</comment>
<comment type="subcellular location">
    <subcellularLocation>
        <location evidence="2">Virion</location>
    </subcellularLocation>
    <subcellularLocation>
        <location>Host nucleus</location>
    </subcellularLocation>
</comment>
<comment type="caution">
    <text evidence="2">Was first thought to be the equivalent of lentiviral Tat protein, but it does not induce any transactivation of viral LTR promoter, or if any, at very low rate. The LTR promoter of this virus has a high basal activity and does apparently not need transactivation by a Tat-like protein.</text>
</comment>
<comment type="sequence caution" evidence="2">
    <conflict type="erroneous initiation">
        <sequence resource="EMBL-CDS" id="AAA17531"/>
    </conflict>
</comment>
<gene>
    <name type="primary">tat</name>
</gene>
<name>VPRL_VILV2</name>
<keyword id="KW-0131">Cell cycle</keyword>
<keyword id="KW-1048">Host nucleus</keyword>
<keyword id="KW-0946">Virion</keyword>
<sequence>MEEVPRRQPGGLVEAEGVFQVYEDWECWDYVSQRVPDERLQRWLAMLTNNQLRRQVIREAQIWMWKHKGAAVRRNCGCRLCNPGWGSQVRNVEL</sequence>
<accession>P23429</accession>